<sequence length="95" mass="10921">MEMARAHVFIRGKVQGVFFRQSMKEVAMRNGVKGWVRNRSDGKTVEAVLEGPRDAVMKVLEWARIGPPGARVEDIEVQWEEYKGEFKDFKILPTV</sequence>
<dbReference type="EC" id="3.6.1.7"/>
<dbReference type="EMBL" id="AE009441">
    <property type="protein sequence ID" value="AAL63341.1"/>
    <property type="molecule type" value="Genomic_DNA"/>
</dbReference>
<dbReference type="RefSeq" id="WP_011007813.1">
    <property type="nucleotide sequence ID" value="NC_003364.1"/>
</dbReference>
<dbReference type="SMR" id="Q8ZXK6"/>
<dbReference type="FunCoup" id="Q8ZXK6">
    <property type="interactions" value="41"/>
</dbReference>
<dbReference type="STRING" id="178306.PAE1232"/>
<dbReference type="EnsemblBacteria" id="AAL63341">
    <property type="protein sequence ID" value="AAL63341"/>
    <property type="gene ID" value="PAE1232"/>
</dbReference>
<dbReference type="GeneID" id="1465579"/>
<dbReference type="KEGG" id="pai:PAE1232"/>
<dbReference type="PATRIC" id="fig|178306.9.peg.910"/>
<dbReference type="eggNOG" id="arCOG01674">
    <property type="taxonomic scope" value="Archaea"/>
</dbReference>
<dbReference type="HOGENOM" id="CLU_141932_3_2_2"/>
<dbReference type="InParanoid" id="Q8ZXK6"/>
<dbReference type="Proteomes" id="UP000002439">
    <property type="component" value="Chromosome"/>
</dbReference>
<dbReference type="GO" id="GO:0003998">
    <property type="term" value="F:acylphosphatase activity"/>
    <property type="evidence" value="ECO:0000318"/>
    <property type="project" value="GO_Central"/>
</dbReference>
<dbReference type="FunFam" id="3.30.70.100:FF:000012">
    <property type="entry name" value="Acylphosphatase"/>
    <property type="match status" value="1"/>
</dbReference>
<dbReference type="Gene3D" id="3.30.70.100">
    <property type="match status" value="1"/>
</dbReference>
<dbReference type="InterPro" id="IPR020456">
    <property type="entry name" value="Acylphosphatase"/>
</dbReference>
<dbReference type="InterPro" id="IPR001792">
    <property type="entry name" value="Acylphosphatase-like_dom"/>
</dbReference>
<dbReference type="InterPro" id="IPR036046">
    <property type="entry name" value="Acylphosphatase-like_dom_sf"/>
</dbReference>
<dbReference type="InterPro" id="IPR017968">
    <property type="entry name" value="Acylphosphatase_CS"/>
</dbReference>
<dbReference type="PANTHER" id="PTHR47268">
    <property type="entry name" value="ACYLPHOSPHATASE"/>
    <property type="match status" value="1"/>
</dbReference>
<dbReference type="PANTHER" id="PTHR47268:SF4">
    <property type="entry name" value="ACYLPHOSPHATASE"/>
    <property type="match status" value="1"/>
</dbReference>
<dbReference type="Pfam" id="PF00708">
    <property type="entry name" value="Acylphosphatase"/>
    <property type="match status" value="1"/>
</dbReference>
<dbReference type="SUPFAM" id="SSF54975">
    <property type="entry name" value="Acylphosphatase/BLUF domain-like"/>
    <property type="match status" value="1"/>
</dbReference>
<dbReference type="PROSITE" id="PS00150">
    <property type="entry name" value="ACYLPHOSPHATASE_1"/>
    <property type="match status" value="1"/>
</dbReference>
<dbReference type="PROSITE" id="PS51160">
    <property type="entry name" value="ACYLPHOSPHATASE_3"/>
    <property type="match status" value="1"/>
</dbReference>
<reference key="1">
    <citation type="journal article" date="2002" name="Proc. Natl. Acad. Sci. U.S.A.">
        <title>Genome sequence of the hyperthermophilic crenarchaeon Pyrobaculum aerophilum.</title>
        <authorList>
            <person name="Fitz-Gibbon S.T."/>
            <person name="Ladner H."/>
            <person name="Kim U.-J."/>
            <person name="Stetter K.O."/>
            <person name="Simon M.I."/>
            <person name="Miller J.H."/>
        </authorList>
    </citation>
    <scope>NUCLEOTIDE SEQUENCE [LARGE SCALE GENOMIC DNA]</scope>
    <source>
        <strain>ATCC 51768 / DSM 7523 / JCM 9630 / CIP 104966 / NBRC 100827 / IM2</strain>
    </source>
</reference>
<protein>
    <recommendedName>
        <fullName>Acylphosphatase</fullName>
        <ecNumber>3.6.1.7</ecNumber>
    </recommendedName>
    <alternativeName>
        <fullName>Acylphosphate phosphohydrolase</fullName>
    </alternativeName>
</protein>
<comment type="catalytic activity">
    <reaction>
        <text>an acyl phosphate + H2O = a carboxylate + phosphate + H(+)</text>
        <dbReference type="Rhea" id="RHEA:14965"/>
        <dbReference type="ChEBI" id="CHEBI:15377"/>
        <dbReference type="ChEBI" id="CHEBI:15378"/>
        <dbReference type="ChEBI" id="CHEBI:29067"/>
        <dbReference type="ChEBI" id="CHEBI:43474"/>
        <dbReference type="ChEBI" id="CHEBI:59918"/>
        <dbReference type="EC" id="3.6.1.7"/>
    </reaction>
</comment>
<comment type="similarity">
    <text evidence="2">Belongs to the acylphosphatase family.</text>
</comment>
<keyword id="KW-0378">Hydrolase</keyword>
<keyword id="KW-1185">Reference proteome</keyword>
<gene>
    <name type="primary">acyP</name>
    <name type="ordered locus">PAE1232</name>
</gene>
<accession>Q8ZXK6</accession>
<name>ACYP_PYRAE</name>
<proteinExistence type="inferred from homology"/>
<evidence type="ECO:0000255" key="1">
    <source>
        <dbReference type="PROSITE-ProRule" id="PRU00520"/>
    </source>
</evidence>
<evidence type="ECO:0000305" key="2"/>
<feature type="chain" id="PRO_0000326865" description="Acylphosphatase">
    <location>
        <begin position="1"/>
        <end position="95"/>
    </location>
</feature>
<feature type="domain" description="Acylphosphatase-like" evidence="1">
    <location>
        <begin position="5"/>
        <end position="93"/>
    </location>
</feature>
<feature type="active site" evidence="1">
    <location>
        <position position="20"/>
    </location>
</feature>
<feature type="active site" evidence="1">
    <location>
        <position position="38"/>
    </location>
</feature>
<organism>
    <name type="scientific">Pyrobaculum aerophilum (strain ATCC 51768 / DSM 7523 / JCM 9630 / CIP 104966 / NBRC 100827 / IM2)</name>
    <dbReference type="NCBI Taxonomy" id="178306"/>
    <lineage>
        <taxon>Archaea</taxon>
        <taxon>Thermoproteota</taxon>
        <taxon>Thermoprotei</taxon>
        <taxon>Thermoproteales</taxon>
        <taxon>Thermoproteaceae</taxon>
        <taxon>Pyrobaculum</taxon>
    </lineage>
</organism>